<organism>
    <name type="scientific">Lupinus luteus</name>
    <name type="common">European yellow lupine</name>
    <dbReference type="NCBI Taxonomy" id="3873"/>
    <lineage>
        <taxon>Eukaryota</taxon>
        <taxon>Viridiplantae</taxon>
        <taxon>Streptophyta</taxon>
        <taxon>Embryophyta</taxon>
        <taxon>Tracheophyta</taxon>
        <taxon>Spermatophyta</taxon>
        <taxon>Magnoliopsida</taxon>
        <taxon>eudicotyledons</taxon>
        <taxon>Gunneridae</taxon>
        <taxon>Pentapetalae</taxon>
        <taxon>rosids</taxon>
        <taxon>fabids</taxon>
        <taxon>Fabales</taxon>
        <taxon>Fabaceae</taxon>
        <taxon>Papilionoideae</taxon>
        <taxon>50 kb inversion clade</taxon>
        <taxon>genistoids sensu lato</taxon>
        <taxon>core genistoids</taxon>
        <taxon>Genisteae</taxon>
        <taxon>Lupinus</taxon>
    </lineage>
</organism>
<dbReference type="EMBL" id="KC792647">
    <property type="protein sequence ID" value="AGO64649.1"/>
    <property type="molecule type" value="mRNA"/>
</dbReference>
<dbReference type="SMR" id="S4VGD0"/>
<dbReference type="UniPathway" id="UPA00143"/>
<dbReference type="GO" id="GO:0005737">
    <property type="term" value="C:cytoplasm"/>
    <property type="evidence" value="ECO:0000314"/>
    <property type="project" value="UniProtKB"/>
</dbReference>
<dbReference type="GO" id="GO:0005634">
    <property type="term" value="C:nucleus"/>
    <property type="evidence" value="ECO:0000314"/>
    <property type="project" value="UniProtKB"/>
</dbReference>
<dbReference type="GO" id="GO:0005886">
    <property type="term" value="C:plasma membrane"/>
    <property type="evidence" value="ECO:0007669"/>
    <property type="project" value="UniProtKB-SubCell"/>
</dbReference>
<dbReference type="GO" id="GO:0000976">
    <property type="term" value="F:transcription cis-regulatory region binding"/>
    <property type="evidence" value="ECO:0007669"/>
    <property type="project" value="TreeGrafter"/>
</dbReference>
<dbReference type="GO" id="GO:0008270">
    <property type="term" value="F:zinc ion binding"/>
    <property type="evidence" value="ECO:0007669"/>
    <property type="project" value="UniProtKB-KW"/>
</dbReference>
<dbReference type="GO" id="GO:0010227">
    <property type="term" value="P:floral organ abscission"/>
    <property type="evidence" value="ECO:0000314"/>
    <property type="project" value="UniProtKB"/>
</dbReference>
<dbReference type="GO" id="GO:0009864">
    <property type="term" value="P:induced systemic resistance, jasmonic acid mediated signaling pathway"/>
    <property type="evidence" value="ECO:0007669"/>
    <property type="project" value="TreeGrafter"/>
</dbReference>
<dbReference type="GO" id="GO:0009877">
    <property type="term" value="P:nodulation"/>
    <property type="evidence" value="ECO:0007669"/>
    <property type="project" value="UniProtKB-KW"/>
</dbReference>
<dbReference type="GO" id="GO:0006355">
    <property type="term" value="P:regulation of DNA-templated transcription"/>
    <property type="evidence" value="ECO:0007669"/>
    <property type="project" value="TreeGrafter"/>
</dbReference>
<dbReference type="CDD" id="cd18310">
    <property type="entry name" value="BTB_POZ_NPR_plant"/>
    <property type="match status" value="1"/>
</dbReference>
<dbReference type="FunFam" id="3.30.710.10:FF:000084">
    <property type="entry name" value="regulatory protein NPR5 isoform X1"/>
    <property type="match status" value="1"/>
</dbReference>
<dbReference type="FunFam" id="1.25.40.20:FF:000058">
    <property type="entry name" value="regulatory protein NPR5 isoform X2"/>
    <property type="match status" value="1"/>
</dbReference>
<dbReference type="Gene3D" id="1.25.40.20">
    <property type="entry name" value="Ankyrin repeat-containing domain"/>
    <property type="match status" value="1"/>
</dbReference>
<dbReference type="Gene3D" id="3.30.710.10">
    <property type="entry name" value="Potassium Channel Kv1.1, Chain A"/>
    <property type="match status" value="1"/>
</dbReference>
<dbReference type="InterPro" id="IPR002110">
    <property type="entry name" value="Ankyrin_rpt"/>
</dbReference>
<dbReference type="InterPro" id="IPR036770">
    <property type="entry name" value="Ankyrin_rpt-contain_sf"/>
</dbReference>
<dbReference type="InterPro" id="IPR000210">
    <property type="entry name" value="BTB/POZ_dom"/>
</dbReference>
<dbReference type="InterPro" id="IPR044284">
    <property type="entry name" value="NPR5/6"/>
</dbReference>
<dbReference type="InterPro" id="IPR024228">
    <property type="entry name" value="NPR_central_dom"/>
</dbReference>
<dbReference type="InterPro" id="IPR011333">
    <property type="entry name" value="SKP1/BTB/POZ_sf"/>
</dbReference>
<dbReference type="PANTHER" id="PTHR46668">
    <property type="entry name" value="BTB/POZ DOMAIN AND ANKYRIN REPEAT-CONTAINING PROTEIN NH5.2"/>
    <property type="match status" value="1"/>
</dbReference>
<dbReference type="PANTHER" id="PTHR46668:SF1">
    <property type="entry name" value="REGULATORY PROTEIN NPR5"/>
    <property type="match status" value="1"/>
</dbReference>
<dbReference type="Pfam" id="PF12796">
    <property type="entry name" value="Ank_2"/>
    <property type="match status" value="1"/>
</dbReference>
<dbReference type="Pfam" id="PF00651">
    <property type="entry name" value="BTB"/>
    <property type="match status" value="1"/>
</dbReference>
<dbReference type="Pfam" id="PF11900">
    <property type="entry name" value="DUF3420"/>
    <property type="match status" value="1"/>
</dbReference>
<dbReference type="SMART" id="SM00248">
    <property type="entry name" value="ANK"/>
    <property type="match status" value="2"/>
</dbReference>
<dbReference type="SMART" id="SM00225">
    <property type="entry name" value="BTB"/>
    <property type="match status" value="1"/>
</dbReference>
<dbReference type="SUPFAM" id="SSF48403">
    <property type="entry name" value="Ankyrin repeat"/>
    <property type="match status" value="1"/>
</dbReference>
<dbReference type="SUPFAM" id="SSF54695">
    <property type="entry name" value="POZ domain"/>
    <property type="match status" value="1"/>
</dbReference>
<dbReference type="PROSITE" id="PS50297">
    <property type="entry name" value="ANK_REP_REGION"/>
    <property type="match status" value="1"/>
</dbReference>
<dbReference type="PROSITE" id="PS50088">
    <property type="entry name" value="ANK_REPEAT"/>
    <property type="match status" value="1"/>
</dbReference>
<dbReference type="PROSITE" id="PS50097">
    <property type="entry name" value="BTB"/>
    <property type="match status" value="1"/>
</dbReference>
<dbReference type="PROSITE" id="PS52046">
    <property type="entry name" value="ZF_C2HC_NPR"/>
    <property type="match status" value="1"/>
</dbReference>
<evidence type="ECO:0000250" key="1">
    <source>
        <dbReference type="UniProtKB" id="G3LSH3"/>
    </source>
</evidence>
<evidence type="ECO:0000250" key="2">
    <source>
        <dbReference type="UniProtKB" id="O22286"/>
    </source>
</evidence>
<evidence type="ECO:0000250" key="3">
    <source>
        <dbReference type="UniProtKB" id="Q2HW56"/>
    </source>
</evidence>
<evidence type="ECO:0000250" key="4">
    <source>
        <dbReference type="UniProtKB" id="Q9ZVC2"/>
    </source>
</evidence>
<evidence type="ECO:0000255" key="5"/>
<evidence type="ECO:0000255" key="6">
    <source>
        <dbReference type="PROSITE-ProRule" id="PRU00037"/>
    </source>
</evidence>
<evidence type="ECO:0000255" key="7">
    <source>
        <dbReference type="PROSITE-ProRule" id="PRU01391"/>
    </source>
</evidence>
<evidence type="ECO:0000256" key="8">
    <source>
        <dbReference type="SAM" id="MobiDB-lite"/>
    </source>
</evidence>
<evidence type="ECO:0000269" key="9">
    <source>
    </source>
</evidence>
<evidence type="ECO:0000269" key="10">
    <source>
    </source>
</evidence>
<evidence type="ECO:0000303" key="11">
    <source>
    </source>
</evidence>
<evidence type="ECO:0000303" key="12">
    <source>
    </source>
</evidence>
<evidence type="ECO:0000305" key="13"/>
<evidence type="ECO:0000305" key="14">
    <source>
    </source>
</evidence>
<protein>
    <recommendedName>
        <fullName evidence="13">BTB/POZ domain and ankyrin repeat-containing protein BOP</fullName>
    </recommendedName>
    <alternativeName>
        <fullName evidence="13">NOOT-BOP-COCH-like protein</fullName>
    </alternativeName>
    <alternativeName>
        <fullName evidence="11 12">Protein BLADE-ON-PETIOLE</fullName>
        <shortName evidence="11 12">LlBOP</shortName>
    </alternativeName>
</protein>
<accession>S4VGD0</accession>
<proteinExistence type="evidence at transcript level"/>
<name>NBCL_LUPLU</name>
<gene>
    <name evidence="11" type="primary">BOP</name>
</gene>
<sequence>MSLEDSLRSLSLDYLNLLINGQAFSDVTFSVEGRLVHAHRCILAARSLFFRKFFCGGSDPSASSGLIDQTGVRVNPSGSPRSSNGVLVIPVNSVGYEVFLLLLQFLYSGQVSIVPQKHEARPNCGERGCWHTHCSSAVDLALDTLAAARYFGVEQLALLTQKQLASMVEKASIEDVMKVLLASRKQDMQQLWTTCSHLVAKSGLPPEVLAKHLPIEIVAKIEELRLKSSIARRSMMPHHHHHHHPHDLNAAADLEDQKIRRMRRALDSSDVELVKLMVMGEGLNLDEALALHYAVENCSREVAKALLELGAADVNYPAGPAGKTPLHIAAEMVSPDMVAVLLDHHADPNVRTVDNVTPLDILRTLTSDFLFKGAIPGLTHIEPNKLRLCLELVQSAALVLSREEGNANNNPPSSTTTTLPMYHHPMNDDHNSSSSSGNNHNIGNLNLDSRLVYLNLGATVGSGQMSDDHGGRHGDPAMYHHSHHDY</sequence>
<keyword id="KW-0040">ANK repeat</keyword>
<keyword id="KW-1003">Cell membrane</keyword>
<keyword id="KW-0963">Cytoplasm</keyword>
<keyword id="KW-0472">Membrane</keyword>
<keyword id="KW-0479">Metal-binding</keyword>
<keyword id="KW-0536">Nodulation</keyword>
<keyword id="KW-0539">Nucleus</keyword>
<keyword id="KW-0677">Repeat</keyword>
<keyword id="KW-0833">Ubl conjugation pathway</keyword>
<keyword id="KW-0862">Zinc</keyword>
<keyword id="KW-0863">Zinc-finger</keyword>
<comment type="function">
    <text evidence="1 2 3 14">May act as a substrate-specific adapter of an E3 ubiquitin-protein ligase complex (CUL3-RBX1-BTB) which mediates the ubiquitination and subsequent proteasomal degradation of target proteins (By similarity). Transcriptional co-regulator involved in promoting the fate and determination of leaf and flower meristems (By similarity). Required for the abscission of senescent organs, probably by regulating the cell wall disorganization in abscission zones (AZs, e.g. pulvini at the base of leaves) (Probable). Involved in the coordination of the symbiotic nodule developmental program; promotes the formation of root nodules by interacting directly with APP1 to modulate the expression of the nuclear transcription factor Y subunit (NF-YA1), a key nodulin (By similarity). Necessary for the robust maintenance of nodule identity throughout the nodule developmental program (By similarity).</text>
</comment>
<comment type="pathway">
    <text evidence="2">Protein modification; protein ubiquitination.</text>
</comment>
<comment type="subunit">
    <text evidence="4">Homodimer.</text>
</comment>
<comment type="subcellular location">
    <subcellularLocation>
        <location evidence="10">Nucleus</location>
    </subcellularLocation>
    <subcellularLocation>
        <location evidence="10">Cytoplasm</location>
    </subcellularLocation>
    <subcellularLocation>
        <location evidence="1">Cell membrane</location>
        <topology evidence="1">Peripheral membrane protein</topology>
        <orientation evidence="1">Cytoplasmic side</orientation>
    </subcellularLocation>
</comment>
<comment type="tissue specificity">
    <text evidence="9 10">Expressed in xylem vessels and parenchyma cells of pedicel vascular tissue in the abscission zone (AZ) (PubMed:30993471). Accumulates in developing root nodules and present in roots, especially in the upper part (PubMed:25817415).</text>
</comment>
<comment type="developmental stage">
    <text evidence="9">In developing root nodules, levels correlate with the occurrence of leghemoglobin at all stages.</text>
</comment>
<comment type="induction">
    <text evidence="10">Accumulates in the floral abscission zone (AZ) upon senescence onset (i.e. at the base of pedicel following flower removal).</text>
</comment>
<comment type="domain">
    <text evidence="2">The BTB/POZ domain mediates the interaction with some component of ubiquitin ligase complexes.</text>
</comment>
<comment type="similarity">
    <text evidence="13">Belongs to the plant 'ANKYRIN-BTB/POZ' family. 'NOOT-BOP-COCH-like' (NBCL) subfamily.</text>
</comment>
<reference key="1">
    <citation type="journal article" date="2015" name="J. Plant Physiol.">
        <title>Molecular cloning of the BLADE-ON-PETIOLE gene and expression analyses during nodule development in Lupinus luteus.</title>
        <authorList>
            <person name="Frankowski K."/>
            <person name="Wilmowicz E."/>
            <person name="Kucko A."/>
            <person name="Zienkiewicz A."/>
            <person name="Zienkiewicz K."/>
            <person name="Kopcewicz J."/>
        </authorList>
    </citation>
    <scope>NUCLEOTIDE SEQUENCE [MRNA]</scope>
    <scope>TISSUE SPECIFICITY</scope>
    <scope>DEVELOPMENTAL STAGE</scope>
    <source>
        <strain>cv. Taper</strain>
    </source>
</reference>
<reference key="2">
    <citation type="journal article" date="2019" name="Protoplasma">
        <title>Spatio-temporal localization of LlBOP following early events of floral abscission in yellow lupine.</title>
        <authorList>
            <person name="Kucko A."/>
            <person name="Smolinski D."/>
            <person name="Wilmowicz E."/>
            <person name="Florkiewicz A."/>
            <person name="de Dios Alche J."/>
        </authorList>
    </citation>
    <scope>FUNCTION</scope>
    <scope>TISSUE SPECIFICITY</scope>
    <scope>INDUCTION BY SENESCENCE ONSET</scope>
    <scope>SUBCELLULAR LOCATION</scope>
    <source>
        <strain>cv. Taper</strain>
    </source>
</reference>
<feature type="chain" id="PRO_0000460428" description="BTB/POZ domain and ankyrin repeat-containing protein BOP">
    <location>
        <begin position="1"/>
        <end position="486"/>
    </location>
</feature>
<feature type="domain" description="BTB" evidence="6">
    <location>
        <begin position="25"/>
        <end position="115"/>
    </location>
</feature>
<feature type="repeat" description="ANK 1" evidence="5">
    <location>
        <begin position="257"/>
        <end position="286"/>
    </location>
</feature>
<feature type="repeat" description="ANK 2" evidence="5">
    <location>
        <begin position="287"/>
        <end position="316"/>
    </location>
</feature>
<feature type="repeat" description="ANK 3" evidence="5">
    <location>
        <begin position="321"/>
        <end position="350"/>
    </location>
</feature>
<feature type="repeat" description="ANK 4" evidence="13">
    <location>
        <begin position="354"/>
        <end position="388"/>
    </location>
</feature>
<feature type="zinc finger region" description="C2HC NPR-type" evidence="7">
    <location>
        <begin position="121"/>
        <end position="135"/>
    </location>
</feature>
<feature type="region of interest" description="Disordered" evidence="8">
    <location>
        <begin position="403"/>
        <end position="442"/>
    </location>
</feature>
<feature type="region of interest" description="Disordered" evidence="8">
    <location>
        <begin position="464"/>
        <end position="486"/>
    </location>
</feature>
<feature type="compositionally biased region" description="Low complexity" evidence="8">
    <location>
        <begin position="406"/>
        <end position="418"/>
    </location>
</feature>
<feature type="compositionally biased region" description="Low complexity" evidence="8">
    <location>
        <begin position="432"/>
        <end position="442"/>
    </location>
</feature>
<feature type="compositionally biased region" description="Basic and acidic residues" evidence="8">
    <location>
        <begin position="466"/>
        <end position="475"/>
    </location>
</feature>
<feature type="binding site" evidence="7">
    <location>
        <position position="124"/>
    </location>
    <ligand>
        <name>Zn(2+)</name>
        <dbReference type="ChEBI" id="CHEBI:29105"/>
    </ligand>
</feature>
<feature type="binding site" evidence="7">
    <location>
        <position position="129"/>
    </location>
    <ligand>
        <name>Zn(2+)</name>
        <dbReference type="ChEBI" id="CHEBI:29105"/>
    </ligand>
</feature>
<feature type="binding site" evidence="7">
    <location>
        <position position="131"/>
    </location>
    <ligand>
        <name>Zn(2+)</name>
        <dbReference type="ChEBI" id="CHEBI:29105"/>
    </ligand>
</feature>
<feature type="binding site" evidence="7">
    <location>
        <position position="134"/>
    </location>
    <ligand>
        <name>Zn(2+)</name>
        <dbReference type="ChEBI" id="CHEBI:29105"/>
    </ligand>
</feature>